<evidence type="ECO:0000255" key="1">
    <source>
        <dbReference type="HAMAP-Rule" id="MF_01659"/>
    </source>
</evidence>
<evidence type="ECO:0000305" key="2"/>
<proteinExistence type="inferred from homology"/>
<name>MEND_MYCS2</name>
<feature type="chain" id="PRO_0000341780" description="2-succinyl-5-enolpyruvyl-6-hydroxy-3-cyclohexene-1-carboxylate synthase">
    <location>
        <begin position="1"/>
        <end position="546"/>
    </location>
</feature>
<gene>
    <name evidence="1" type="primary">menD</name>
    <name type="ordered locus">MSMEG_1109</name>
    <name type="ordered locus">MSMEI_1077</name>
</gene>
<comment type="function">
    <text evidence="1">Catalyzes the thiamine diphosphate-dependent decarboxylation of 2-oxoglutarate and the subsequent addition of the resulting succinic semialdehyde-thiamine pyrophosphate anion to isochorismate to yield 2-succinyl-5-enolpyruvyl-6-hydroxy-3-cyclohexene-1-carboxylate (SEPHCHC).</text>
</comment>
<comment type="catalytic activity">
    <reaction evidence="1">
        <text>isochorismate + 2-oxoglutarate + H(+) = 5-enolpyruvoyl-6-hydroxy-2-succinyl-cyclohex-3-ene-1-carboxylate + CO2</text>
        <dbReference type="Rhea" id="RHEA:25593"/>
        <dbReference type="ChEBI" id="CHEBI:15378"/>
        <dbReference type="ChEBI" id="CHEBI:16526"/>
        <dbReference type="ChEBI" id="CHEBI:16810"/>
        <dbReference type="ChEBI" id="CHEBI:29780"/>
        <dbReference type="ChEBI" id="CHEBI:58818"/>
        <dbReference type="EC" id="2.2.1.9"/>
    </reaction>
</comment>
<comment type="cofactor">
    <cofactor evidence="1">
        <name>Mg(2+)</name>
        <dbReference type="ChEBI" id="CHEBI:18420"/>
    </cofactor>
    <cofactor evidence="1">
        <name>Mn(2+)</name>
        <dbReference type="ChEBI" id="CHEBI:29035"/>
    </cofactor>
</comment>
<comment type="cofactor">
    <cofactor evidence="1">
        <name>thiamine diphosphate</name>
        <dbReference type="ChEBI" id="CHEBI:58937"/>
    </cofactor>
    <text evidence="1">Binds 1 thiamine pyrophosphate per subunit.</text>
</comment>
<comment type="pathway">
    <text evidence="1">Quinol/quinone metabolism; 1,4-dihydroxy-2-naphthoate biosynthesis; 1,4-dihydroxy-2-naphthoate from chorismate: step 2/7.</text>
</comment>
<comment type="pathway">
    <text evidence="1">Quinol/quinone metabolism; menaquinone biosynthesis.</text>
</comment>
<comment type="subunit">
    <text evidence="1">Homodimer.</text>
</comment>
<comment type="similarity">
    <text evidence="1">Belongs to the TPP enzyme family. MenD subfamily.</text>
</comment>
<comment type="sequence caution" evidence="2">
    <conflict type="erroneous initiation">
        <sequence resource="EMBL-CDS" id="ABK73707"/>
    </conflict>
</comment>
<dbReference type="EC" id="2.2.1.9" evidence="1"/>
<dbReference type="EMBL" id="CP000480">
    <property type="protein sequence ID" value="ABK73707.1"/>
    <property type="status" value="ALT_INIT"/>
    <property type="molecule type" value="Genomic_DNA"/>
</dbReference>
<dbReference type="EMBL" id="CP001663">
    <property type="protein sequence ID" value="AFP37557.1"/>
    <property type="molecule type" value="Genomic_DNA"/>
</dbReference>
<dbReference type="RefSeq" id="WP_014876969.1">
    <property type="nucleotide sequence ID" value="NZ_SIJM01000011.1"/>
</dbReference>
<dbReference type="RefSeq" id="YP_885503.1">
    <property type="nucleotide sequence ID" value="NC_008596.1"/>
</dbReference>
<dbReference type="SMR" id="A0QRG5"/>
<dbReference type="STRING" id="246196.MSMEG_1109"/>
<dbReference type="PaxDb" id="246196-MSMEI_1077"/>
<dbReference type="KEGG" id="msb:LJ00_05515"/>
<dbReference type="KEGG" id="msg:MSMEI_1077"/>
<dbReference type="KEGG" id="msm:MSMEG_1109"/>
<dbReference type="PATRIC" id="fig|246196.19.peg.1098"/>
<dbReference type="eggNOG" id="COG1165">
    <property type="taxonomic scope" value="Bacteria"/>
</dbReference>
<dbReference type="OrthoDB" id="9791859at2"/>
<dbReference type="UniPathway" id="UPA00079"/>
<dbReference type="UniPathway" id="UPA01057">
    <property type="reaction ID" value="UER00164"/>
</dbReference>
<dbReference type="Proteomes" id="UP000000757">
    <property type="component" value="Chromosome"/>
</dbReference>
<dbReference type="Proteomes" id="UP000006158">
    <property type="component" value="Chromosome"/>
</dbReference>
<dbReference type="GO" id="GO:0070204">
    <property type="term" value="F:2-succinyl-5-enolpyruvyl-6-hydroxy-3-cyclohexene-1-carboxylic-acid synthase activity"/>
    <property type="evidence" value="ECO:0007669"/>
    <property type="project" value="UniProtKB-UniRule"/>
</dbReference>
<dbReference type="GO" id="GO:0000287">
    <property type="term" value="F:magnesium ion binding"/>
    <property type="evidence" value="ECO:0007669"/>
    <property type="project" value="UniProtKB-UniRule"/>
</dbReference>
<dbReference type="GO" id="GO:0030145">
    <property type="term" value="F:manganese ion binding"/>
    <property type="evidence" value="ECO:0007669"/>
    <property type="project" value="UniProtKB-UniRule"/>
</dbReference>
<dbReference type="GO" id="GO:0030976">
    <property type="term" value="F:thiamine pyrophosphate binding"/>
    <property type="evidence" value="ECO:0007669"/>
    <property type="project" value="UniProtKB-UniRule"/>
</dbReference>
<dbReference type="GO" id="GO:0009234">
    <property type="term" value="P:menaquinone biosynthetic process"/>
    <property type="evidence" value="ECO:0007669"/>
    <property type="project" value="UniProtKB-UniRule"/>
</dbReference>
<dbReference type="CDD" id="cd07037">
    <property type="entry name" value="TPP_PYR_MenD"/>
    <property type="match status" value="1"/>
</dbReference>
<dbReference type="CDD" id="cd02009">
    <property type="entry name" value="TPP_SHCHC_synthase"/>
    <property type="match status" value="1"/>
</dbReference>
<dbReference type="Gene3D" id="3.40.50.970">
    <property type="match status" value="2"/>
</dbReference>
<dbReference type="Gene3D" id="3.40.50.1220">
    <property type="entry name" value="TPP-binding domain"/>
    <property type="match status" value="1"/>
</dbReference>
<dbReference type="HAMAP" id="MF_01659">
    <property type="entry name" value="MenD"/>
    <property type="match status" value="1"/>
</dbReference>
<dbReference type="InterPro" id="IPR004433">
    <property type="entry name" value="MenaQ_synth_MenD"/>
</dbReference>
<dbReference type="InterPro" id="IPR029061">
    <property type="entry name" value="THDP-binding"/>
</dbReference>
<dbReference type="InterPro" id="IPR012001">
    <property type="entry name" value="Thiamin_PyroP_enz_TPP-bd_dom"/>
</dbReference>
<dbReference type="NCBIfam" id="TIGR00173">
    <property type="entry name" value="menD"/>
    <property type="match status" value="1"/>
</dbReference>
<dbReference type="PANTHER" id="PTHR42916">
    <property type="entry name" value="2-SUCCINYL-5-ENOLPYRUVYL-6-HYDROXY-3-CYCLOHEXENE-1-CARBOXYLATE SYNTHASE"/>
    <property type="match status" value="1"/>
</dbReference>
<dbReference type="PANTHER" id="PTHR42916:SF1">
    <property type="entry name" value="PROTEIN PHYLLO, CHLOROPLASTIC"/>
    <property type="match status" value="1"/>
</dbReference>
<dbReference type="Pfam" id="PF02776">
    <property type="entry name" value="TPP_enzyme_N"/>
    <property type="match status" value="1"/>
</dbReference>
<dbReference type="PIRSF" id="PIRSF004983">
    <property type="entry name" value="MenD"/>
    <property type="match status" value="1"/>
</dbReference>
<dbReference type="SUPFAM" id="SSF52518">
    <property type="entry name" value="Thiamin diphosphate-binding fold (THDP-binding)"/>
    <property type="match status" value="2"/>
</dbReference>
<sequence>MNPSTTQARIVVDELIRGGVRDVVLCPGSRNAPLAFALSDADRAGRIRLHVRIDERTAGYLAIGLAVAERAPVCIAMTSGTAVANLGPAVVEANYARVPLIVLSANRPYEMLGTGANQTFEQLGYFGTQVRAAISLGLAPDLTGPNAADLDTLNAQWRSATCRVLVAATGARSANAGPVQFDIPLREPLVPDPAEPAGGTIPPGRPGGRSWTHTPPVTFDQPLDIDLTPDTVVIAGHGAGEHPNLAELPTVAEPTAPPPANPLHPLALRLAHPKQVIMLGRPTLHRPVSTLLADPSVPVYALTTGPRWPDVSGNSQATGTRAVTSGAPSAAWLRKCAELNEHAVTAVRKQLAAHPMTTGLHVAAAVADALRPGDQLVLGASNPVRDAALVGLRPDGIKVRSNRGVAGIDGTISTAIGAALAHDGRTVALIGDLTFVHDSSGLLIGPTEPTPRSLTIVVSNDNGGGIFELLEQGDPRFSDVSSRIFGTPHDVNIGALCHAYHVDYHQIEADALGAALEDPFQGMRVLEVKADRSSLRSLHASIKAAL</sequence>
<protein>
    <recommendedName>
        <fullName evidence="1">2-succinyl-5-enolpyruvyl-6-hydroxy-3-cyclohexene-1-carboxylate synthase</fullName>
        <shortName evidence="1">SEPHCHC synthase</shortName>
        <ecNumber evidence="1">2.2.1.9</ecNumber>
    </recommendedName>
    <alternativeName>
        <fullName evidence="1">Menaquinone biosynthesis protein MenD</fullName>
    </alternativeName>
</protein>
<reference key="1">
    <citation type="submission" date="2006-10" db="EMBL/GenBank/DDBJ databases">
        <authorList>
            <person name="Fleischmann R.D."/>
            <person name="Dodson R.J."/>
            <person name="Haft D.H."/>
            <person name="Merkel J.S."/>
            <person name="Nelson W.C."/>
            <person name="Fraser C.M."/>
        </authorList>
    </citation>
    <scope>NUCLEOTIDE SEQUENCE [LARGE SCALE GENOMIC DNA]</scope>
    <source>
        <strain>ATCC 700084 / mc(2)155</strain>
    </source>
</reference>
<reference key="2">
    <citation type="journal article" date="2007" name="Genome Biol.">
        <title>Interrupted coding sequences in Mycobacterium smegmatis: authentic mutations or sequencing errors?</title>
        <authorList>
            <person name="Deshayes C."/>
            <person name="Perrodou E."/>
            <person name="Gallien S."/>
            <person name="Euphrasie D."/>
            <person name="Schaeffer C."/>
            <person name="Van-Dorsselaer A."/>
            <person name="Poch O."/>
            <person name="Lecompte O."/>
            <person name="Reyrat J.-M."/>
        </authorList>
    </citation>
    <scope>NUCLEOTIDE SEQUENCE [LARGE SCALE GENOMIC DNA]</scope>
    <source>
        <strain>ATCC 700084 / mc(2)155</strain>
    </source>
</reference>
<reference key="3">
    <citation type="journal article" date="2009" name="Genome Res.">
        <title>Ortho-proteogenomics: multiple proteomes investigation through orthology and a new MS-based protocol.</title>
        <authorList>
            <person name="Gallien S."/>
            <person name="Perrodou E."/>
            <person name="Carapito C."/>
            <person name="Deshayes C."/>
            <person name="Reyrat J.-M."/>
            <person name="Van Dorsselaer A."/>
            <person name="Poch O."/>
            <person name="Schaeffer C."/>
            <person name="Lecompte O."/>
        </authorList>
    </citation>
    <scope>NUCLEOTIDE SEQUENCE [LARGE SCALE GENOMIC DNA]</scope>
    <source>
        <strain>ATCC 700084 / mc(2)155</strain>
    </source>
</reference>
<keyword id="KW-0460">Magnesium</keyword>
<keyword id="KW-0464">Manganese</keyword>
<keyword id="KW-0474">Menaquinone biosynthesis</keyword>
<keyword id="KW-0479">Metal-binding</keyword>
<keyword id="KW-1185">Reference proteome</keyword>
<keyword id="KW-0786">Thiamine pyrophosphate</keyword>
<keyword id="KW-0808">Transferase</keyword>
<accession>A0QRG5</accession>
<accession>I7FXK7</accession>
<organism>
    <name type="scientific">Mycolicibacterium smegmatis (strain ATCC 700084 / mc(2)155)</name>
    <name type="common">Mycobacterium smegmatis</name>
    <dbReference type="NCBI Taxonomy" id="246196"/>
    <lineage>
        <taxon>Bacteria</taxon>
        <taxon>Bacillati</taxon>
        <taxon>Actinomycetota</taxon>
        <taxon>Actinomycetes</taxon>
        <taxon>Mycobacteriales</taxon>
        <taxon>Mycobacteriaceae</taxon>
        <taxon>Mycolicibacterium</taxon>
    </lineage>
</organism>